<reference key="1">
    <citation type="journal article" date="2004" name="Nat. Genet.">
        <title>Complete sequencing and characterization of 21,243 full-length human cDNAs.</title>
        <authorList>
            <person name="Ota T."/>
            <person name="Suzuki Y."/>
            <person name="Nishikawa T."/>
            <person name="Otsuki T."/>
            <person name="Sugiyama T."/>
            <person name="Irie R."/>
            <person name="Wakamatsu A."/>
            <person name="Hayashi K."/>
            <person name="Sato H."/>
            <person name="Nagai K."/>
            <person name="Kimura K."/>
            <person name="Makita H."/>
            <person name="Sekine M."/>
            <person name="Obayashi M."/>
            <person name="Nishi T."/>
            <person name="Shibahara T."/>
            <person name="Tanaka T."/>
            <person name="Ishii S."/>
            <person name="Yamamoto J."/>
            <person name="Saito K."/>
            <person name="Kawai Y."/>
            <person name="Isono Y."/>
            <person name="Nakamura Y."/>
            <person name="Nagahari K."/>
            <person name="Murakami K."/>
            <person name="Yasuda T."/>
            <person name="Iwayanagi T."/>
            <person name="Wagatsuma M."/>
            <person name="Shiratori A."/>
            <person name="Sudo H."/>
            <person name="Hosoiri T."/>
            <person name="Kaku Y."/>
            <person name="Kodaira H."/>
            <person name="Kondo H."/>
            <person name="Sugawara M."/>
            <person name="Takahashi M."/>
            <person name="Kanda K."/>
            <person name="Yokoi T."/>
            <person name="Furuya T."/>
            <person name="Kikkawa E."/>
            <person name="Omura Y."/>
            <person name="Abe K."/>
            <person name="Kamihara K."/>
            <person name="Katsuta N."/>
            <person name="Sato K."/>
            <person name="Tanikawa M."/>
            <person name="Yamazaki M."/>
            <person name="Ninomiya K."/>
            <person name="Ishibashi T."/>
            <person name="Yamashita H."/>
            <person name="Murakawa K."/>
            <person name="Fujimori K."/>
            <person name="Tanai H."/>
            <person name="Kimata M."/>
            <person name="Watanabe M."/>
            <person name="Hiraoka S."/>
            <person name="Chiba Y."/>
            <person name="Ishida S."/>
            <person name="Ono Y."/>
            <person name="Takiguchi S."/>
            <person name="Watanabe S."/>
            <person name="Yosida M."/>
            <person name="Hotuta T."/>
            <person name="Kusano J."/>
            <person name="Kanehori K."/>
            <person name="Takahashi-Fujii A."/>
            <person name="Hara H."/>
            <person name="Tanase T.-O."/>
            <person name="Nomura Y."/>
            <person name="Togiya S."/>
            <person name="Komai F."/>
            <person name="Hara R."/>
            <person name="Takeuchi K."/>
            <person name="Arita M."/>
            <person name="Imose N."/>
            <person name="Musashino K."/>
            <person name="Yuuki H."/>
            <person name="Oshima A."/>
            <person name="Sasaki N."/>
            <person name="Aotsuka S."/>
            <person name="Yoshikawa Y."/>
            <person name="Matsunawa H."/>
            <person name="Ichihara T."/>
            <person name="Shiohata N."/>
            <person name="Sano S."/>
            <person name="Moriya S."/>
            <person name="Momiyama H."/>
            <person name="Satoh N."/>
            <person name="Takami S."/>
            <person name="Terashima Y."/>
            <person name="Suzuki O."/>
            <person name="Nakagawa S."/>
            <person name="Senoh A."/>
            <person name="Mizoguchi H."/>
            <person name="Goto Y."/>
            <person name="Shimizu F."/>
            <person name="Wakebe H."/>
            <person name="Hishigaki H."/>
            <person name="Watanabe T."/>
            <person name="Sugiyama A."/>
            <person name="Takemoto M."/>
            <person name="Kawakami B."/>
            <person name="Yamazaki M."/>
            <person name="Watanabe K."/>
            <person name="Kumagai A."/>
            <person name="Itakura S."/>
            <person name="Fukuzumi Y."/>
            <person name="Fujimori Y."/>
            <person name="Komiyama M."/>
            <person name="Tashiro H."/>
            <person name="Tanigami A."/>
            <person name="Fujiwara T."/>
            <person name="Ono T."/>
            <person name="Yamada K."/>
            <person name="Fujii Y."/>
            <person name="Ozaki K."/>
            <person name="Hirao M."/>
            <person name="Ohmori Y."/>
            <person name="Kawabata A."/>
            <person name="Hikiji T."/>
            <person name="Kobatake N."/>
            <person name="Inagaki H."/>
            <person name="Ikema Y."/>
            <person name="Okamoto S."/>
            <person name="Okitani R."/>
            <person name="Kawakami T."/>
            <person name="Noguchi S."/>
            <person name="Itoh T."/>
            <person name="Shigeta K."/>
            <person name="Senba T."/>
            <person name="Matsumura K."/>
            <person name="Nakajima Y."/>
            <person name="Mizuno T."/>
            <person name="Morinaga M."/>
            <person name="Sasaki M."/>
            <person name="Togashi T."/>
            <person name="Oyama M."/>
            <person name="Hata H."/>
            <person name="Watanabe M."/>
            <person name="Komatsu T."/>
            <person name="Mizushima-Sugano J."/>
            <person name="Satoh T."/>
            <person name="Shirai Y."/>
            <person name="Takahashi Y."/>
            <person name="Nakagawa K."/>
            <person name="Okumura K."/>
            <person name="Nagase T."/>
            <person name="Nomura N."/>
            <person name="Kikuchi H."/>
            <person name="Masuho Y."/>
            <person name="Yamashita R."/>
            <person name="Nakai K."/>
            <person name="Yada T."/>
            <person name="Nakamura Y."/>
            <person name="Ohara O."/>
            <person name="Isogai T."/>
            <person name="Sugano S."/>
        </authorList>
    </citation>
    <scope>NUCLEOTIDE SEQUENCE [LARGE SCALE MRNA] (ISOFORM 2)</scope>
    <source>
        <tissue>Gastric mucosa</tissue>
    </source>
</reference>
<reference key="2">
    <citation type="journal article" date="2006" name="Nature">
        <title>Human chromosome 11 DNA sequence and analysis including novel gene identification.</title>
        <authorList>
            <person name="Taylor T.D."/>
            <person name="Noguchi H."/>
            <person name="Totoki Y."/>
            <person name="Toyoda A."/>
            <person name="Kuroki Y."/>
            <person name="Dewar K."/>
            <person name="Lloyd C."/>
            <person name="Itoh T."/>
            <person name="Takeda T."/>
            <person name="Kim D.-W."/>
            <person name="She X."/>
            <person name="Barlow K.F."/>
            <person name="Bloom T."/>
            <person name="Bruford E."/>
            <person name="Chang J.L."/>
            <person name="Cuomo C.A."/>
            <person name="Eichler E."/>
            <person name="FitzGerald M.G."/>
            <person name="Jaffe D.B."/>
            <person name="LaButti K."/>
            <person name="Nicol R."/>
            <person name="Park H.-S."/>
            <person name="Seaman C."/>
            <person name="Sougnez C."/>
            <person name="Yang X."/>
            <person name="Zimmer A.R."/>
            <person name="Zody M.C."/>
            <person name="Birren B.W."/>
            <person name="Nusbaum C."/>
            <person name="Fujiyama A."/>
            <person name="Hattori M."/>
            <person name="Rogers J."/>
            <person name="Lander E.S."/>
            <person name="Sakaki Y."/>
        </authorList>
    </citation>
    <scope>NUCLEOTIDE SEQUENCE [LARGE SCALE GENOMIC DNA]</scope>
</reference>
<feature type="chain" id="PRO_0000297592" description="NXPE family member 2">
    <location>
        <begin position="1"/>
        <end position="559"/>
    </location>
</feature>
<feature type="transmembrane region" description="Helical" evidence="1">
    <location>
        <begin position="17"/>
        <end position="37"/>
    </location>
</feature>
<feature type="splice variant" id="VSP_040454" description="In isoform 2." evidence="2">
    <original>NKSENIKKNCQIGMKTPFPSGYTLKKMWITAFCKQIKFNETKNINDCLERKLIYLMG</original>
    <variation>PALFYFIFRDSLTLSPRLECSGMISAHCNLCLPGSSDSPDSASHVAGITSVQRHTWL</variation>
    <location>
        <begin position="309"/>
        <end position="365"/>
    </location>
</feature>
<feature type="splice variant" id="VSP_040455" description="In isoform 2." evidence="2">
    <location>
        <begin position="366"/>
        <end position="559"/>
    </location>
</feature>
<feature type="sequence variant" id="VAR_034647" description="In dbSNP:rs11215158.">
    <original>V</original>
    <variation>A</variation>
    <location>
        <position position="103"/>
    </location>
</feature>
<name>NXPE2_HUMAN</name>
<protein>
    <recommendedName>
        <fullName>NXPE family member 2</fullName>
    </recommendedName>
    <alternativeName>
        <fullName>Protein FAM55B</fullName>
    </alternativeName>
</protein>
<organism>
    <name type="scientific">Homo sapiens</name>
    <name type="common">Human</name>
    <dbReference type="NCBI Taxonomy" id="9606"/>
    <lineage>
        <taxon>Eukaryota</taxon>
        <taxon>Metazoa</taxon>
        <taxon>Chordata</taxon>
        <taxon>Craniata</taxon>
        <taxon>Vertebrata</taxon>
        <taxon>Euteleostomi</taxon>
        <taxon>Mammalia</taxon>
        <taxon>Eutheria</taxon>
        <taxon>Euarchontoglires</taxon>
        <taxon>Primates</taxon>
        <taxon>Haplorrhini</taxon>
        <taxon>Catarrhini</taxon>
        <taxon>Hominidae</taxon>
        <taxon>Homo</taxon>
    </lineage>
</organism>
<evidence type="ECO:0000255" key="1"/>
<evidence type="ECO:0000303" key="2">
    <source>
    </source>
</evidence>
<evidence type="ECO:0000305" key="3"/>
<keyword id="KW-0025">Alternative splicing</keyword>
<keyword id="KW-0472">Membrane</keyword>
<keyword id="KW-1267">Proteomics identification</keyword>
<keyword id="KW-1185">Reference proteome</keyword>
<keyword id="KW-0812">Transmembrane</keyword>
<keyword id="KW-1133">Transmembrane helix</keyword>
<gene>
    <name type="primary">NXPE2</name>
    <name type="synonym">FAM55B</name>
</gene>
<accession>Q96DL1</accession>
<accession>Q2NKI8</accession>
<sequence length="559" mass="64901">MVEKILIHRILTLFPNAIARKLLLMLTFILIFWIIYLASKDHTKFSFNLENHIILNQGNIFKKYSHSETPLCPAVSPKETELRIKDIMEKLDQQIPPRPFTHVNTTTSATHSTATILNPQDTYCRGDQLDILLEVRDHLGHRKQYGGDFLRARMYSTALMAGASGKVTDFNNGTYLVSFTLFWEGQVSLSLLLIHPSEGVSALWRARNQGCDRIIFTGLFANRSSNVFTECGLTLNTNAELCQYMDDRDQEAFYCVRPQHMPCEALTHMTTRTRNISYLSKEEWRLFHRSNIGVEMMKNFTPIEVIPCNKSENIKKNCQIGMKTPFPSGYTLKKMWITAFCKQIKFNETKNINDCLERKLIYLMGDSTLHQWIYYLQKAVKTLKYFDHHGAGIFKTHVLLDVERHILIQWKKHGHPFVTKKLFSVKDENYIPREIDQVAGDKNTAIVITLGQHFRPFPINIFIRRAINIQKAIERLFLRSPETKVILKTENTREIEQNAEMFSDFHGYIQNLIIRDIFVDLNVGIIDAWDMTIAYCTNNAHPPDYVIQNQIGMFLNYIC</sequence>
<proteinExistence type="evidence at protein level"/>
<dbReference type="EMBL" id="AK057953">
    <property type="protein sequence ID" value="BAB71621.1"/>
    <property type="molecule type" value="mRNA"/>
</dbReference>
<dbReference type="EMBL" id="AP002774">
    <property type="status" value="NOT_ANNOTATED_CDS"/>
    <property type="molecule type" value="Genomic_DNA"/>
</dbReference>
<dbReference type="CCDS" id="CCDS44738.1">
    <molecule id="Q96DL1-1"/>
</dbReference>
<dbReference type="RefSeq" id="NP_872301.2">
    <molecule id="Q96DL1-1"/>
    <property type="nucleotide sequence ID" value="NM_182495.6"/>
</dbReference>
<dbReference type="BioGRID" id="125685">
    <property type="interactions" value="17"/>
</dbReference>
<dbReference type="FunCoup" id="Q96DL1">
    <property type="interactions" value="4"/>
</dbReference>
<dbReference type="IntAct" id="Q96DL1">
    <property type="interactions" value="11"/>
</dbReference>
<dbReference type="MINT" id="Q96DL1"/>
<dbReference type="STRING" id="9606.ENSP00000374237"/>
<dbReference type="GlyGen" id="Q96DL1">
    <property type="glycosylation" value="1 site, 1 O-linked glycan (1 site)"/>
</dbReference>
<dbReference type="PhosphoSitePlus" id="Q96DL1"/>
<dbReference type="BioMuta" id="NXPE2"/>
<dbReference type="DMDM" id="317373363"/>
<dbReference type="jPOST" id="Q96DL1"/>
<dbReference type="MassIVE" id="Q96DL1"/>
<dbReference type="PaxDb" id="9606-ENSP00000374237"/>
<dbReference type="PeptideAtlas" id="Q96DL1"/>
<dbReference type="ProteomicsDB" id="76292">
    <molecule id="Q96DL1-1"/>
</dbReference>
<dbReference type="ProteomicsDB" id="76293">
    <molecule id="Q96DL1-3"/>
</dbReference>
<dbReference type="Antibodypedia" id="66117">
    <property type="antibodies" value="17 antibodies from 8 providers"/>
</dbReference>
<dbReference type="DNASU" id="120406"/>
<dbReference type="Ensembl" id="ENST00000389586.6">
    <molecule id="Q96DL1-1"/>
    <property type="protein sequence ID" value="ENSP00000374237.4"/>
    <property type="gene ID" value="ENSG00000204361.10"/>
</dbReference>
<dbReference type="GeneID" id="120406"/>
<dbReference type="KEGG" id="hsa:120406"/>
<dbReference type="MANE-Select" id="ENST00000389586.6">
    <property type="protein sequence ID" value="ENSP00000374237.4"/>
    <property type="RefSeq nucleotide sequence ID" value="NM_182495.6"/>
    <property type="RefSeq protein sequence ID" value="NP_872301.2"/>
</dbReference>
<dbReference type="UCSC" id="uc009yyy.3">
    <molecule id="Q96DL1-1"/>
    <property type="organism name" value="human"/>
</dbReference>
<dbReference type="AGR" id="HGNC:26331"/>
<dbReference type="CTD" id="120406"/>
<dbReference type="DisGeNET" id="120406"/>
<dbReference type="GeneCards" id="NXPE2"/>
<dbReference type="HGNC" id="HGNC:26331">
    <property type="gene designation" value="NXPE2"/>
</dbReference>
<dbReference type="HPA" id="ENSG00000204361">
    <property type="expression patterns" value="Group enriched (epididymis, intestine, salivary gland)"/>
</dbReference>
<dbReference type="neXtProt" id="NX_Q96DL1"/>
<dbReference type="OpenTargets" id="ENSG00000204361"/>
<dbReference type="VEuPathDB" id="HostDB:ENSG00000204361"/>
<dbReference type="eggNOG" id="ENOG502QW5F">
    <property type="taxonomic scope" value="Eukaryota"/>
</dbReference>
<dbReference type="GeneTree" id="ENSGT00950000182866"/>
<dbReference type="HOGENOM" id="CLU_031119_0_0_1"/>
<dbReference type="InParanoid" id="Q96DL1"/>
<dbReference type="OMA" id="EVHQNAE"/>
<dbReference type="OrthoDB" id="2112051at2759"/>
<dbReference type="PAN-GO" id="Q96DL1">
    <property type="GO annotations" value="0 GO annotations based on evolutionary models"/>
</dbReference>
<dbReference type="PhylomeDB" id="Q96DL1"/>
<dbReference type="TreeFam" id="TF329555"/>
<dbReference type="PathwayCommons" id="Q96DL1"/>
<dbReference type="SignaLink" id="Q96DL1"/>
<dbReference type="BioGRID-ORCS" id="120406">
    <property type="hits" value="2 hits in 1132 CRISPR screens"/>
</dbReference>
<dbReference type="ChiTaRS" id="NXPE2">
    <property type="organism name" value="human"/>
</dbReference>
<dbReference type="GenomeRNAi" id="120406"/>
<dbReference type="Pharos" id="Q96DL1">
    <property type="development level" value="Tdark"/>
</dbReference>
<dbReference type="PRO" id="PR:Q96DL1"/>
<dbReference type="Proteomes" id="UP000005640">
    <property type="component" value="Chromosome 11"/>
</dbReference>
<dbReference type="RNAct" id="Q96DL1">
    <property type="molecule type" value="protein"/>
</dbReference>
<dbReference type="Bgee" id="ENSG00000204361">
    <property type="expression patterns" value="Expressed in calcaneal tendon and 41 other cell types or tissues"/>
</dbReference>
<dbReference type="GO" id="GO:0016020">
    <property type="term" value="C:membrane"/>
    <property type="evidence" value="ECO:0007669"/>
    <property type="project" value="UniProtKB-SubCell"/>
</dbReference>
<dbReference type="InterPro" id="IPR014756">
    <property type="entry name" value="Ig_E-set"/>
</dbReference>
<dbReference type="InterPro" id="IPR057106">
    <property type="entry name" value="NXPE4_C"/>
</dbReference>
<dbReference type="InterPro" id="IPR026845">
    <property type="entry name" value="NXPH/NXPE"/>
</dbReference>
<dbReference type="PANTHER" id="PTHR16165">
    <property type="entry name" value="NXPE FAMILY MEMBER"/>
    <property type="match status" value="1"/>
</dbReference>
<dbReference type="PANTHER" id="PTHR16165:SF10">
    <property type="entry name" value="NXPE FAMILY MEMBER 2"/>
    <property type="match status" value="1"/>
</dbReference>
<dbReference type="Pfam" id="PF06312">
    <property type="entry name" value="Neurexophilin"/>
    <property type="match status" value="1"/>
</dbReference>
<dbReference type="Pfam" id="PF24536">
    <property type="entry name" value="NXPE4_C"/>
    <property type="match status" value="1"/>
</dbReference>
<dbReference type="SUPFAM" id="SSF81296">
    <property type="entry name" value="E set domains"/>
    <property type="match status" value="1"/>
</dbReference>
<comment type="interaction">
    <interactant intactId="EBI-11791121">
        <id>Q96DL1</id>
    </interactant>
    <interactant intactId="EBI-357345">
        <id>Q14160</id>
        <label>SCRIB</label>
    </interactant>
    <organismsDiffer>false</organismsDiffer>
    <experiments>2</experiments>
</comment>
<comment type="interaction">
    <interactant intactId="EBI-12128194">
        <id>Q96DL1-3</id>
    </interactant>
    <interactant intactId="EBI-750734">
        <id>Q9NRY6</id>
        <label>PLSCR3</label>
    </interactant>
    <organismsDiffer>false</organismsDiffer>
    <experiments>3</experiments>
</comment>
<comment type="interaction">
    <interactant intactId="EBI-12128194">
        <id>Q96DL1-3</id>
    </interactant>
    <interactant intactId="EBI-13636688">
        <id>P15884-3</id>
        <label>TCF4</label>
    </interactant>
    <organismsDiffer>false</organismsDiffer>
    <experiments>3</experiments>
</comment>
<comment type="subcellular location">
    <subcellularLocation>
        <location evidence="3">Membrane</location>
        <topology evidence="3">Single-pass membrane protein</topology>
    </subcellularLocation>
</comment>
<comment type="alternative products">
    <event type="alternative splicing"/>
    <isoform>
        <id>Q96DL1-1</id>
        <name>1</name>
        <sequence type="displayed"/>
    </isoform>
    <isoform>
        <id>Q96DL1-3</id>
        <name>2</name>
        <sequence type="described" ref="VSP_040454 VSP_040455"/>
    </isoform>
</comment>
<comment type="miscellaneous">
    <molecule>Isoform 1</molecule>
    <text>Gene prediction based on EST data and similarity to mouse ortholog.</text>
</comment>
<comment type="similarity">
    <text evidence="3">Belongs to the NXPE family.</text>
</comment>